<reference key="1">
    <citation type="journal article" date="2005" name="Genome Biol.">
        <title>Full-length cDNAs from chicken bursal lymphocytes to facilitate gene function analysis.</title>
        <authorList>
            <person name="Caldwell R.B."/>
            <person name="Kierzek A.M."/>
            <person name="Arakawa H."/>
            <person name="Bezzubov Y."/>
            <person name="Zaim J."/>
            <person name="Fiedler P."/>
            <person name="Kutter S."/>
            <person name="Blagodatski A."/>
            <person name="Kostovska D."/>
            <person name="Koter M."/>
            <person name="Plachy J."/>
            <person name="Carninci P."/>
            <person name="Hayashizaki Y."/>
            <person name="Buerstedde J.-M."/>
        </authorList>
    </citation>
    <scope>NUCLEOTIDE SEQUENCE [LARGE SCALE MRNA]</scope>
    <source>
        <strain>CB</strain>
        <tissue>Bursa of Fabricius</tissue>
    </source>
</reference>
<name>CRCM1_CHICK</name>
<evidence type="ECO:0000250" key="1">
    <source>
        <dbReference type="UniProtKB" id="Q96D31"/>
    </source>
</evidence>
<evidence type="ECO:0000255" key="2"/>
<evidence type="ECO:0000305" key="3"/>
<sequence length="226" mass="25130">MSLNEHSMQALSWRKLYLSRAKLKASSRTSALLSGFAMVAMVEVQLDAEHDYPRGLLIAFSACTTVLVAVHLFALMISTCILPNIEAVSNVHNLNSVKESPHERMHRHIELAWAFSTVIGTLLFLAEVVLLCWVKFLPLKKNPLDPAENSNSSITSGQAAAIASTSIMVPFGLIFIVFAVHFYRSLVSHKTDRQFQELNELAEFAWLQDQLDHRGDAISPAVTHFA</sequence>
<keyword id="KW-1064">Adaptive immunity</keyword>
<keyword id="KW-0106">Calcium</keyword>
<keyword id="KW-0107">Calcium channel</keyword>
<keyword id="KW-0109">Calcium transport</keyword>
<keyword id="KW-1003">Cell membrane</keyword>
<keyword id="KW-0325">Glycoprotein</keyword>
<keyword id="KW-0391">Immunity</keyword>
<keyword id="KW-0407">Ion channel</keyword>
<keyword id="KW-0406">Ion transport</keyword>
<keyword id="KW-0472">Membrane</keyword>
<keyword id="KW-1185">Reference proteome</keyword>
<keyword id="KW-0812">Transmembrane</keyword>
<keyword id="KW-1133">Transmembrane helix</keyword>
<keyword id="KW-0813">Transport</keyword>
<organism>
    <name type="scientific">Gallus gallus</name>
    <name type="common">Chicken</name>
    <dbReference type="NCBI Taxonomy" id="9031"/>
    <lineage>
        <taxon>Eukaryota</taxon>
        <taxon>Metazoa</taxon>
        <taxon>Chordata</taxon>
        <taxon>Craniata</taxon>
        <taxon>Vertebrata</taxon>
        <taxon>Euteleostomi</taxon>
        <taxon>Archelosauria</taxon>
        <taxon>Archosauria</taxon>
        <taxon>Dinosauria</taxon>
        <taxon>Saurischia</taxon>
        <taxon>Theropoda</taxon>
        <taxon>Coelurosauria</taxon>
        <taxon>Aves</taxon>
        <taxon>Neognathae</taxon>
        <taxon>Galloanserae</taxon>
        <taxon>Galliformes</taxon>
        <taxon>Phasianidae</taxon>
        <taxon>Phasianinae</taxon>
        <taxon>Gallus</taxon>
    </lineage>
</organism>
<comment type="function">
    <text evidence="1">Ca(2+) release-activated Ca(2+) (CRAC) channel subunit which mediates Ca(2+) influx following depletion of intracellular Ca(2+) stores.</text>
</comment>
<comment type="subcellular location">
    <subcellularLocation>
        <location evidence="1">Cell membrane</location>
        <topology evidence="1">Multi-pass membrane protein</topology>
    </subcellularLocation>
</comment>
<comment type="similarity">
    <text evidence="3">Belongs to the Orai family.</text>
</comment>
<protein>
    <recommendedName>
        <fullName>Calcium release-activated calcium channel protein 1</fullName>
    </recommendedName>
    <alternativeName>
        <fullName>Protein orai-1</fullName>
    </alternativeName>
    <alternativeName>
        <fullName>Transmembrane protein 142A</fullName>
    </alternativeName>
</protein>
<dbReference type="EMBL" id="AJ719929">
    <property type="protein sequence ID" value="CAG31588.1"/>
    <property type="molecule type" value="mRNA"/>
</dbReference>
<dbReference type="RefSeq" id="NP_001025829.1">
    <property type="nucleotide sequence ID" value="NM_001030658.1"/>
</dbReference>
<dbReference type="SMR" id="Q5ZL05"/>
<dbReference type="FunCoup" id="Q5ZL05">
    <property type="interactions" value="609"/>
</dbReference>
<dbReference type="STRING" id="9031.ENSGALP00000068239"/>
<dbReference type="GlyCosmos" id="Q5ZL05">
    <property type="glycosylation" value="1 site, No reported glycans"/>
</dbReference>
<dbReference type="GlyGen" id="Q5ZL05">
    <property type="glycosylation" value="1 site"/>
</dbReference>
<dbReference type="PaxDb" id="9031-ENSGALP00000006734"/>
<dbReference type="GeneID" id="416845"/>
<dbReference type="KEGG" id="gga:416845"/>
<dbReference type="CTD" id="84876"/>
<dbReference type="VEuPathDB" id="HostDB:geneid_416845"/>
<dbReference type="eggNOG" id="KOG4298">
    <property type="taxonomic scope" value="Eukaryota"/>
</dbReference>
<dbReference type="InParanoid" id="Q5ZL05"/>
<dbReference type="OrthoDB" id="61124at2759"/>
<dbReference type="PhylomeDB" id="Q5ZL05"/>
<dbReference type="PRO" id="PR:Q5ZL05"/>
<dbReference type="Proteomes" id="UP000000539">
    <property type="component" value="Unassembled WGS sequence"/>
</dbReference>
<dbReference type="GO" id="GO:0016020">
    <property type="term" value="C:membrane"/>
    <property type="evidence" value="ECO:0000318"/>
    <property type="project" value="GO_Central"/>
</dbReference>
<dbReference type="GO" id="GO:0005886">
    <property type="term" value="C:plasma membrane"/>
    <property type="evidence" value="ECO:0000250"/>
    <property type="project" value="UniProtKB"/>
</dbReference>
<dbReference type="GO" id="GO:0015279">
    <property type="term" value="F:store-operated calcium channel activity"/>
    <property type="evidence" value="ECO:0000250"/>
    <property type="project" value="UniProtKB"/>
</dbReference>
<dbReference type="GO" id="GO:0002250">
    <property type="term" value="P:adaptive immune response"/>
    <property type="evidence" value="ECO:0007669"/>
    <property type="project" value="UniProtKB-KW"/>
</dbReference>
<dbReference type="GO" id="GO:0051928">
    <property type="term" value="P:positive regulation of calcium ion transport"/>
    <property type="evidence" value="ECO:0000250"/>
    <property type="project" value="UniProtKB"/>
</dbReference>
<dbReference type="GO" id="GO:0002115">
    <property type="term" value="P:store-operated calcium entry"/>
    <property type="evidence" value="ECO:0000250"/>
    <property type="project" value="UniProtKB"/>
</dbReference>
<dbReference type="FunFam" id="1.20.140.140:FF:000001">
    <property type="entry name" value="Calcium release-activated calcium modulator 1"/>
    <property type="match status" value="1"/>
</dbReference>
<dbReference type="Gene3D" id="1.20.140.140">
    <property type="entry name" value="Calcium release-activated calcium channel protein Orai"/>
    <property type="match status" value="1"/>
</dbReference>
<dbReference type="InterPro" id="IPR012446">
    <property type="entry name" value="CRAC_channel"/>
</dbReference>
<dbReference type="InterPro" id="IPR038350">
    <property type="entry name" value="Orai_sf"/>
</dbReference>
<dbReference type="PANTHER" id="PTHR31501">
    <property type="entry name" value="CALCIUM RELEASE-ACTIVATED CALCIUM CHANNEL PROTEIN 1"/>
    <property type="match status" value="1"/>
</dbReference>
<dbReference type="PANTHER" id="PTHR31501:SF3">
    <property type="entry name" value="CALCIUM RELEASE-ACTIVATED CALCIUM CHANNEL PROTEIN 1"/>
    <property type="match status" value="1"/>
</dbReference>
<dbReference type="Pfam" id="PF07856">
    <property type="entry name" value="Orai-1"/>
    <property type="match status" value="1"/>
</dbReference>
<gene>
    <name type="primary">ORAI1</name>
    <name type="synonym">CRACM1</name>
    <name type="synonym">TMEM142A</name>
    <name type="ORF">RCJMB04_8f15</name>
</gene>
<feature type="chain" id="PRO_0000234384" description="Calcium release-activated calcium channel protein 1">
    <location>
        <begin position="1"/>
        <end position="226"/>
    </location>
</feature>
<feature type="topological domain" description="Extracellular" evidence="2">
    <location>
        <begin position="1"/>
        <end position="56"/>
    </location>
</feature>
<feature type="transmembrane region" description="Helical" evidence="2">
    <location>
        <begin position="57"/>
        <end position="77"/>
    </location>
</feature>
<feature type="topological domain" description="Cytoplasmic" evidence="2">
    <location>
        <begin position="78"/>
        <end position="110"/>
    </location>
</feature>
<feature type="transmembrane region" description="Helical" evidence="2">
    <location>
        <begin position="111"/>
        <end position="131"/>
    </location>
</feature>
<feature type="topological domain" description="Extracellular" evidence="2">
    <location>
        <begin position="132"/>
        <end position="159"/>
    </location>
</feature>
<feature type="transmembrane region" description="Helical" evidence="2">
    <location>
        <begin position="160"/>
        <end position="180"/>
    </location>
</feature>
<feature type="topological domain" description="Cytoplasmic" evidence="2">
    <location>
        <begin position="181"/>
        <end position="226"/>
    </location>
</feature>
<feature type="glycosylation site" description="N-linked (GlcNAc...) asparagine" evidence="2">
    <location>
        <position position="151"/>
    </location>
</feature>
<accession>Q5ZL05</accession>
<proteinExistence type="evidence at transcript level"/>